<name>PUR9_SINFN</name>
<organism>
    <name type="scientific">Sinorhizobium fredii (strain NBRC 101917 / NGR234)</name>
    <dbReference type="NCBI Taxonomy" id="394"/>
    <lineage>
        <taxon>Bacteria</taxon>
        <taxon>Pseudomonadati</taxon>
        <taxon>Pseudomonadota</taxon>
        <taxon>Alphaproteobacteria</taxon>
        <taxon>Hyphomicrobiales</taxon>
        <taxon>Rhizobiaceae</taxon>
        <taxon>Sinorhizobium/Ensifer group</taxon>
        <taxon>Sinorhizobium</taxon>
    </lineage>
</organism>
<accession>C3MAR5</accession>
<reference key="1">
    <citation type="journal article" date="2009" name="Appl. Environ. Microbiol.">
        <title>Rhizobium sp. strain NGR234 possesses a remarkable number of secretion systems.</title>
        <authorList>
            <person name="Schmeisser C."/>
            <person name="Liesegang H."/>
            <person name="Krysciak D."/>
            <person name="Bakkou N."/>
            <person name="Le Quere A."/>
            <person name="Wollherr A."/>
            <person name="Heinemeyer I."/>
            <person name="Morgenstern B."/>
            <person name="Pommerening-Roeser A."/>
            <person name="Flores M."/>
            <person name="Palacios R."/>
            <person name="Brenner S."/>
            <person name="Gottschalk G."/>
            <person name="Schmitz R.A."/>
            <person name="Broughton W.J."/>
            <person name="Perret X."/>
            <person name="Strittmatter A.W."/>
            <person name="Streit W.R."/>
        </authorList>
    </citation>
    <scope>NUCLEOTIDE SEQUENCE [LARGE SCALE GENOMIC DNA]</scope>
    <source>
        <strain>NBRC 101917 / NGR234</strain>
    </source>
</reference>
<evidence type="ECO:0000255" key="1">
    <source>
        <dbReference type="HAMAP-Rule" id="MF_00139"/>
    </source>
</evidence>
<evidence type="ECO:0000255" key="2">
    <source>
        <dbReference type="PROSITE-ProRule" id="PRU01202"/>
    </source>
</evidence>
<protein>
    <recommendedName>
        <fullName evidence="1">Bifunctional purine biosynthesis protein PurH</fullName>
    </recommendedName>
    <domain>
        <recommendedName>
            <fullName evidence="1">Phosphoribosylaminoimidazolecarboxamide formyltransferase</fullName>
            <ecNumber evidence="1">2.1.2.3</ecNumber>
        </recommendedName>
        <alternativeName>
            <fullName evidence="1">AICAR transformylase</fullName>
        </alternativeName>
    </domain>
    <domain>
        <recommendedName>
            <fullName evidence="1">IMP cyclohydrolase</fullName>
            <ecNumber evidence="1">3.5.4.10</ecNumber>
        </recommendedName>
        <alternativeName>
            <fullName evidence="1">ATIC</fullName>
        </alternativeName>
        <alternativeName>
            <fullName evidence="1">IMP synthase</fullName>
        </alternativeName>
        <alternativeName>
            <fullName evidence="1">Inosinicase</fullName>
        </alternativeName>
    </domain>
</protein>
<proteinExistence type="inferred from homology"/>
<keyword id="KW-0378">Hydrolase</keyword>
<keyword id="KW-0511">Multifunctional enzyme</keyword>
<keyword id="KW-0658">Purine biosynthesis</keyword>
<keyword id="KW-1185">Reference proteome</keyword>
<keyword id="KW-0808">Transferase</keyword>
<dbReference type="EC" id="2.1.2.3" evidence="1"/>
<dbReference type="EC" id="3.5.4.10" evidence="1"/>
<dbReference type="EMBL" id="CP001389">
    <property type="protein sequence ID" value="ACP27058.1"/>
    <property type="molecule type" value="Genomic_DNA"/>
</dbReference>
<dbReference type="RefSeq" id="WP_012709805.1">
    <property type="nucleotide sequence ID" value="NC_012587.1"/>
</dbReference>
<dbReference type="RefSeq" id="YP_002827811.1">
    <property type="nucleotide sequence ID" value="NC_012587.1"/>
</dbReference>
<dbReference type="SMR" id="C3MAR5"/>
<dbReference type="STRING" id="394.NGR_c33280"/>
<dbReference type="KEGG" id="rhi:NGR_c33280"/>
<dbReference type="PATRIC" id="fig|394.7.peg.6170"/>
<dbReference type="eggNOG" id="COG0138">
    <property type="taxonomic scope" value="Bacteria"/>
</dbReference>
<dbReference type="HOGENOM" id="CLU_016316_5_2_5"/>
<dbReference type="OrthoDB" id="9802065at2"/>
<dbReference type="UniPathway" id="UPA00074">
    <property type="reaction ID" value="UER00133"/>
</dbReference>
<dbReference type="UniPathway" id="UPA00074">
    <property type="reaction ID" value="UER00135"/>
</dbReference>
<dbReference type="Proteomes" id="UP000001054">
    <property type="component" value="Chromosome"/>
</dbReference>
<dbReference type="GO" id="GO:0005829">
    <property type="term" value="C:cytosol"/>
    <property type="evidence" value="ECO:0007669"/>
    <property type="project" value="TreeGrafter"/>
</dbReference>
<dbReference type="GO" id="GO:0003937">
    <property type="term" value="F:IMP cyclohydrolase activity"/>
    <property type="evidence" value="ECO:0007669"/>
    <property type="project" value="UniProtKB-UniRule"/>
</dbReference>
<dbReference type="GO" id="GO:0004643">
    <property type="term" value="F:phosphoribosylaminoimidazolecarboxamide formyltransferase activity"/>
    <property type="evidence" value="ECO:0007669"/>
    <property type="project" value="UniProtKB-UniRule"/>
</dbReference>
<dbReference type="GO" id="GO:0006189">
    <property type="term" value="P:'de novo' IMP biosynthetic process"/>
    <property type="evidence" value="ECO:0007669"/>
    <property type="project" value="UniProtKB-UniRule"/>
</dbReference>
<dbReference type="CDD" id="cd01421">
    <property type="entry name" value="IMPCH"/>
    <property type="match status" value="1"/>
</dbReference>
<dbReference type="FunFam" id="3.40.140.20:FF:000001">
    <property type="entry name" value="Bifunctional purine biosynthesis protein PurH"/>
    <property type="match status" value="1"/>
</dbReference>
<dbReference type="FunFam" id="3.40.140.20:FF:000002">
    <property type="entry name" value="Bifunctional purine biosynthesis protein PurH"/>
    <property type="match status" value="1"/>
</dbReference>
<dbReference type="FunFam" id="3.40.50.1380:FF:000001">
    <property type="entry name" value="Bifunctional purine biosynthesis protein PurH"/>
    <property type="match status" value="1"/>
</dbReference>
<dbReference type="Gene3D" id="3.40.140.20">
    <property type="match status" value="2"/>
</dbReference>
<dbReference type="Gene3D" id="3.40.50.1380">
    <property type="entry name" value="Methylglyoxal synthase-like domain"/>
    <property type="match status" value="1"/>
</dbReference>
<dbReference type="HAMAP" id="MF_00139">
    <property type="entry name" value="PurH"/>
    <property type="match status" value="1"/>
</dbReference>
<dbReference type="InterPro" id="IPR024051">
    <property type="entry name" value="AICAR_Tfase_dup_dom_sf"/>
</dbReference>
<dbReference type="InterPro" id="IPR016193">
    <property type="entry name" value="Cytidine_deaminase-like"/>
</dbReference>
<dbReference type="InterPro" id="IPR011607">
    <property type="entry name" value="MGS-like_dom"/>
</dbReference>
<dbReference type="InterPro" id="IPR036914">
    <property type="entry name" value="MGS-like_dom_sf"/>
</dbReference>
<dbReference type="InterPro" id="IPR002695">
    <property type="entry name" value="PurH-like"/>
</dbReference>
<dbReference type="NCBIfam" id="NF002049">
    <property type="entry name" value="PRK00881.1"/>
    <property type="match status" value="1"/>
</dbReference>
<dbReference type="NCBIfam" id="TIGR00355">
    <property type="entry name" value="purH"/>
    <property type="match status" value="1"/>
</dbReference>
<dbReference type="PANTHER" id="PTHR11692:SF0">
    <property type="entry name" value="BIFUNCTIONAL PURINE BIOSYNTHESIS PROTEIN ATIC"/>
    <property type="match status" value="1"/>
</dbReference>
<dbReference type="PANTHER" id="PTHR11692">
    <property type="entry name" value="BIFUNCTIONAL PURINE BIOSYNTHESIS PROTEIN PURH"/>
    <property type="match status" value="1"/>
</dbReference>
<dbReference type="Pfam" id="PF01808">
    <property type="entry name" value="AICARFT_IMPCHas"/>
    <property type="match status" value="1"/>
</dbReference>
<dbReference type="Pfam" id="PF02142">
    <property type="entry name" value="MGS"/>
    <property type="match status" value="1"/>
</dbReference>
<dbReference type="PIRSF" id="PIRSF000414">
    <property type="entry name" value="AICARFT_IMPCHas"/>
    <property type="match status" value="1"/>
</dbReference>
<dbReference type="SMART" id="SM00798">
    <property type="entry name" value="AICARFT_IMPCHas"/>
    <property type="match status" value="1"/>
</dbReference>
<dbReference type="SMART" id="SM00851">
    <property type="entry name" value="MGS"/>
    <property type="match status" value="1"/>
</dbReference>
<dbReference type="SUPFAM" id="SSF53927">
    <property type="entry name" value="Cytidine deaminase-like"/>
    <property type="match status" value="1"/>
</dbReference>
<dbReference type="SUPFAM" id="SSF52335">
    <property type="entry name" value="Methylglyoxal synthase-like"/>
    <property type="match status" value="1"/>
</dbReference>
<dbReference type="PROSITE" id="PS51855">
    <property type="entry name" value="MGS"/>
    <property type="match status" value="1"/>
</dbReference>
<feature type="chain" id="PRO_1000122968" description="Bifunctional purine biosynthesis protein PurH">
    <location>
        <begin position="1"/>
        <end position="536"/>
    </location>
</feature>
<feature type="domain" description="MGS-like" evidence="2">
    <location>
        <begin position="8"/>
        <end position="158"/>
    </location>
</feature>
<sequence length="536" mass="56436">MAVASKKIPAPDEVRIQTALLSVSDKAGIVELARALHGKGVRLVSTGGTHKALAAAGLPVSDVSELTGFPEVMDGRVKTLHPGVHGGLLAIRDDADHKAAMDEHGITGIDLAVINLYPFEEVRAQGGDYPTTVENIDIGGPAMIRASAKNHAYVTIVTDPADYSALLEEIADGTTRYAFRQKMAAKAYARTAAYDAAISNWFAEALDLAMPRHRVIGGVLKEEMRYGENPHQKAGFYVTGEQRPGVATAALLQGKQLSYNNINDTDAAFELVAEFLPEKAPACAIIKHANPCGVATAPSLTEAYRRALACDSTSAFGGIIALNQELDAETAEEIVKLFTEVIIAPSVSDEAKAIIARKPNLRLLAAGGLPDARTPGLTAKTVAGGLLVQTRDNGMVEDLELKVVTKRAPTAQELEDMKFAFKVAKHVKSNAVVYAKDGQTAGIGAGQMSRVDSARIAAIKAEEAARAHGLAAPLTRGSAVASEAFLPFADGLLSAIAAGATAVIQPGGSMRDEEVIAAANEHNVAMVFTGMRHFRH</sequence>
<comment type="catalytic activity">
    <reaction evidence="1">
        <text>(6R)-10-formyltetrahydrofolate + 5-amino-1-(5-phospho-beta-D-ribosyl)imidazole-4-carboxamide = 5-formamido-1-(5-phospho-D-ribosyl)imidazole-4-carboxamide + (6S)-5,6,7,8-tetrahydrofolate</text>
        <dbReference type="Rhea" id="RHEA:22192"/>
        <dbReference type="ChEBI" id="CHEBI:57453"/>
        <dbReference type="ChEBI" id="CHEBI:58467"/>
        <dbReference type="ChEBI" id="CHEBI:58475"/>
        <dbReference type="ChEBI" id="CHEBI:195366"/>
        <dbReference type="EC" id="2.1.2.3"/>
    </reaction>
</comment>
<comment type="catalytic activity">
    <reaction evidence="1">
        <text>IMP + H2O = 5-formamido-1-(5-phospho-D-ribosyl)imidazole-4-carboxamide</text>
        <dbReference type="Rhea" id="RHEA:18445"/>
        <dbReference type="ChEBI" id="CHEBI:15377"/>
        <dbReference type="ChEBI" id="CHEBI:58053"/>
        <dbReference type="ChEBI" id="CHEBI:58467"/>
        <dbReference type="EC" id="3.5.4.10"/>
    </reaction>
</comment>
<comment type="pathway">
    <text evidence="1">Purine metabolism; IMP biosynthesis via de novo pathway; 5-formamido-1-(5-phospho-D-ribosyl)imidazole-4-carboxamide from 5-amino-1-(5-phospho-D-ribosyl)imidazole-4-carboxamide (10-formyl THF route): step 1/1.</text>
</comment>
<comment type="pathway">
    <text evidence="1">Purine metabolism; IMP biosynthesis via de novo pathway; IMP from 5-formamido-1-(5-phospho-D-ribosyl)imidazole-4-carboxamide: step 1/1.</text>
</comment>
<comment type="domain">
    <text evidence="1">The IMP cyclohydrolase activity resides in the N-terminal region.</text>
</comment>
<comment type="similarity">
    <text evidence="1">Belongs to the PurH family.</text>
</comment>
<gene>
    <name evidence="1" type="primary">purH</name>
    <name type="ordered locus">NGR_c33280</name>
</gene>